<dbReference type="EMBL" id="AY205124">
    <property type="protein sequence ID" value="AAP30998.1"/>
    <property type="molecule type" value="Genomic_DNA"/>
</dbReference>
<dbReference type="SMR" id="Q864H3"/>
<dbReference type="GlyCosmos" id="Q864H3">
    <property type="glycosylation" value="1 site, No reported glycans"/>
</dbReference>
<dbReference type="GO" id="GO:0005886">
    <property type="term" value="C:plasma membrane"/>
    <property type="evidence" value="ECO:0000250"/>
    <property type="project" value="UniProtKB"/>
</dbReference>
<dbReference type="GO" id="GO:0004980">
    <property type="term" value="F:melanocyte-stimulating hormone receptor activity"/>
    <property type="evidence" value="ECO:0007669"/>
    <property type="project" value="InterPro"/>
</dbReference>
<dbReference type="GO" id="GO:0007189">
    <property type="term" value="P:adenylate cyclase-activating G protein-coupled receptor signaling pathway"/>
    <property type="evidence" value="ECO:0007669"/>
    <property type="project" value="UniProtKB-ARBA"/>
</dbReference>
<dbReference type="FunFam" id="1.20.1070.10:FF:000211">
    <property type="entry name" value="Melanocyte-stimulating hormone receptor"/>
    <property type="match status" value="1"/>
</dbReference>
<dbReference type="Gene3D" id="1.20.1070.10">
    <property type="entry name" value="Rhodopsin 7-helix transmembrane proteins"/>
    <property type="match status" value="1"/>
</dbReference>
<dbReference type="InterPro" id="IPR000276">
    <property type="entry name" value="GPCR_Rhodpsn"/>
</dbReference>
<dbReference type="InterPro" id="IPR017452">
    <property type="entry name" value="GPCR_Rhodpsn_7TM"/>
</dbReference>
<dbReference type="InterPro" id="IPR001671">
    <property type="entry name" value="Melcrt_ACTH_rcpt"/>
</dbReference>
<dbReference type="InterPro" id="IPR000761">
    <property type="entry name" value="MSH_rcpt"/>
</dbReference>
<dbReference type="PANTHER" id="PTHR22750">
    <property type="entry name" value="G-PROTEIN COUPLED RECEPTOR"/>
    <property type="match status" value="1"/>
</dbReference>
<dbReference type="Pfam" id="PF00001">
    <property type="entry name" value="7tm_1"/>
    <property type="match status" value="1"/>
</dbReference>
<dbReference type="PRINTS" id="PR00237">
    <property type="entry name" value="GPCRRHODOPSN"/>
</dbReference>
<dbReference type="PRINTS" id="PR00534">
    <property type="entry name" value="MCRFAMILY"/>
</dbReference>
<dbReference type="PRINTS" id="PR00536">
    <property type="entry name" value="MELNOCYTESHR"/>
</dbReference>
<dbReference type="SMART" id="SM01381">
    <property type="entry name" value="7TM_GPCR_Srsx"/>
    <property type="match status" value="1"/>
</dbReference>
<dbReference type="SUPFAM" id="SSF81321">
    <property type="entry name" value="Family A G protein-coupled receptor-like"/>
    <property type="match status" value="1"/>
</dbReference>
<dbReference type="PROSITE" id="PS00237">
    <property type="entry name" value="G_PROTEIN_RECEP_F1_1"/>
    <property type="match status" value="1"/>
</dbReference>
<dbReference type="PROSITE" id="PS50262">
    <property type="entry name" value="G_PROTEIN_RECEP_F1_2"/>
    <property type="match status" value="1"/>
</dbReference>
<gene>
    <name type="primary">MC1R</name>
</gene>
<keyword id="KW-1003">Cell membrane</keyword>
<keyword id="KW-0297">G-protein coupled receptor</keyword>
<keyword id="KW-0325">Glycoprotein</keyword>
<keyword id="KW-0449">Lipoprotein</keyword>
<keyword id="KW-0472">Membrane</keyword>
<keyword id="KW-0564">Palmitate</keyword>
<keyword id="KW-0675">Receptor</keyword>
<keyword id="KW-0807">Transducer</keyword>
<keyword id="KW-0812">Transmembrane</keyword>
<keyword id="KW-1133">Transmembrane helix</keyword>
<evidence type="ECO:0000250" key="1">
    <source>
        <dbReference type="UniProtKB" id="Q01726"/>
    </source>
</evidence>
<evidence type="ECO:0000255" key="2"/>
<evidence type="ECO:0000255" key="3">
    <source>
        <dbReference type="PROSITE-ProRule" id="PRU00521"/>
    </source>
</evidence>
<name>MSHR_SAGGE</name>
<organism>
    <name type="scientific">Saguinus geoffroyi</name>
    <name type="common">Geoffroy's tamarin</name>
    <dbReference type="NCBI Taxonomy" id="43778"/>
    <lineage>
        <taxon>Eukaryota</taxon>
        <taxon>Metazoa</taxon>
        <taxon>Chordata</taxon>
        <taxon>Craniata</taxon>
        <taxon>Vertebrata</taxon>
        <taxon>Euteleostomi</taxon>
        <taxon>Mammalia</taxon>
        <taxon>Eutheria</taxon>
        <taxon>Euarchontoglires</taxon>
        <taxon>Primates</taxon>
        <taxon>Haplorrhini</taxon>
        <taxon>Platyrrhini</taxon>
        <taxon>Cebidae</taxon>
        <taxon>Callitrichinae</taxon>
        <taxon>Saguinus</taxon>
    </lineage>
</organism>
<proteinExistence type="inferred from homology"/>
<sequence>MPMQGAQRKLLGSLNSTPTATSNLGLAANHTGAPCLEVSIPDGLFLSLGLVSLVENVLVVAAIAKNRNLHSSMYCFICCLALSDLLVSGSNMLETAVILLLETGALATRTSVVQQLHNTINVLTCSSMLCSLCFLGAIAVDRYISIFYALRYHSIMTLPRAQRAIAAIWVASVLSSTLFITYYDHAAVLLCLVVFFLAMLVLMAVLYVHMLARACQHAHGIIRLHKRQTPAHQAFGLRGAATLTILLGIFFLCWGPFFLHLTLVVFCPQHLTCSCIFKNFKVFLTLIICNTIIDPLIYAFRSQELRRTLKEVLCSW</sequence>
<comment type="function">
    <text evidence="1">Receptor for MSH (alpha, beta and gamma) and ACTH. The activity of this receptor is mediated by G proteins which activate adenylate cyclase. Mediates melanogenesis, the production of eumelanin (black/brown) and phaeomelanin (red/yellow), via regulation of cAMP signaling in melanocytes.</text>
</comment>
<comment type="subunit">
    <text evidence="1">Interacts with MGRN1, but does not undergo MGRN1-mediated ubiquitination; this interaction competes with GNAS-binding and thus inhibits agonist-induced cAMP production. Interacts with OPN3; the interaction results in a decrease in MC1R-mediated cAMP signaling and ultimately a decrease in melanin production in melanocytes.</text>
</comment>
<comment type="subcellular location">
    <subcellularLocation>
        <location evidence="1">Cell membrane</location>
        <topology evidence="2">Multi-pass membrane protein</topology>
    </subcellularLocation>
</comment>
<comment type="similarity">
    <text evidence="3">Belongs to the G-protein coupled receptor 1 family.</text>
</comment>
<accession>Q864H3</accession>
<reference key="1">
    <citation type="journal article" date="2003" name="Am. J. Phys. Anthropol.">
        <title>Evolution of a pigmentation gene, the melanocortin-1 receptor, in primates.</title>
        <authorList>
            <person name="Mundy N.I."/>
            <person name="Kelly J."/>
        </authorList>
    </citation>
    <scope>NUCLEOTIDE SEQUENCE [GENOMIC DNA]</scope>
    <source>
        <strain>Isolate 1</strain>
    </source>
</reference>
<protein>
    <recommendedName>
        <fullName>Melanocyte-stimulating hormone receptor</fullName>
        <shortName>MSH-R</shortName>
    </recommendedName>
    <alternativeName>
        <fullName>Melanocortin receptor 1</fullName>
        <shortName>MC1-R</shortName>
    </alternativeName>
</protein>
<feature type="chain" id="PRO_0000069845" description="Melanocyte-stimulating hormone receptor">
    <location>
        <begin position="1"/>
        <end position="316"/>
    </location>
</feature>
<feature type="topological domain" description="Extracellular" evidence="2">
    <location>
        <begin position="1"/>
        <end position="37"/>
    </location>
</feature>
<feature type="transmembrane region" description="Helical; Name=1" evidence="2">
    <location>
        <begin position="38"/>
        <end position="63"/>
    </location>
</feature>
<feature type="topological domain" description="Cytoplasmic" evidence="2">
    <location>
        <begin position="64"/>
        <end position="72"/>
    </location>
</feature>
<feature type="transmembrane region" description="Helical; Name=2" evidence="2">
    <location>
        <begin position="73"/>
        <end position="93"/>
    </location>
</feature>
<feature type="topological domain" description="Extracellular" evidence="2">
    <location>
        <begin position="94"/>
        <end position="118"/>
    </location>
</feature>
<feature type="transmembrane region" description="Helical; Name=3" evidence="2">
    <location>
        <begin position="119"/>
        <end position="140"/>
    </location>
</feature>
<feature type="topological domain" description="Cytoplasmic" evidence="2">
    <location>
        <begin position="141"/>
        <end position="163"/>
    </location>
</feature>
<feature type="transmembrane region" description="Helical; Name=4" evidence="2">
    <location>
        <begin position="164"/>
        <end position="183"/>
    </location>
</feature>
<feature type="topological domain" description="Extracellular" evidence="2">
    <location>
        <begin position="184"/>
        <end position="191"/>
    </location>
</feature>
<feature type="transmembrane region" description="Helical; Name=5" evidence="2">
    <location>
        <begin position="192"/>
        <end position="211"/>
    </location>
</feature>
<feature type="topological domain" description="Cytoplasmic" evidence="2">
    <location>
        <begin position="212"/>
        <end position="240"/>
    </location>
</feature>
<feature type="transmembrane region" description="Helical; Name=6" evidence="2">
    <location>
        <begin position="241"/>
        <end position="266"/>
    </location>
</feature>
<feature type="topological domain" description="Extracellular" evidence="2">
    <location>
        <begin position="267"/>
        <end position="279"/>
    </location>
</feature>
<feature type="transmembrane region" description="Helical; Name=7" evidence="2">
    <location>
        <begin position="280"/>
        <end position="300"/>
    </location>
</feature>
<feature type="topological domain" description="Cytoplasmic" evidence="2">
    <location>
        <begin position="301"/>
        <end position="316"/>
    </location>
</feature>
<feature type="lipid moiety-binding region" description="S-palmitoyl cysteine" evidence="2">
    <location>
        <position position="314"/>
    </location>
</feature>
<feature type="glycosylation site" description="N-linked (GlcNAc...) asparagine" evidence="2">
    <location>
        <position position="29"/>
    </location>
</feature>